<name>RDRP_YOMV</name>
<protein>
    <recommendedName>
        <fullName>Replicase large subunit</fullName>
        <ecNumber>2.7.7.48</ecNumber>
    </recommendedName>
    <alternativeName>
        <fullName>182 kDa protein</fullName>
    </alternativeName>
    <component>
        <recommendedName>
            <fullName>Replicase small subunit</fullName>
            <ecNumber>3.6.4.13</ecNumber>
        </recommendedName>
        <alternativeName>
            <fullName>125 kDa protein</fullName>
        </alternativeName>
        <alternativeName>
            <fullName>Methyltransferase/RNA helicase</fullName>
            <shortName>MT/HEL</shortName>
        </alternativeName>
    </component>
</protein>
<organismHost>
    <name type="scientific">Brassica napus</name>
    <name type="common">Rape</name>
    <dbReference type="NCBI Taxonomy" id="3708"/>
</organismHost>
<organism>
    <name type="scientific">Youcai mosaic virus</name>
    <name type="common">YoMV</name>
    <dbReference type="NCBI Taxonomy" id="228578"/>
    <lineage>
        <taxon>Viruses</taxon>
        <taxon>Riboviria</taxon>
        <taxon>Orthornavirae</taxon>
        <taxon>Kitrinoviricota</taxon>
        <taxon>Alsuviricetes</taxon>
        <taxon>Martellivirales</taxon>
        <taxon>Virgaviridae</taxon>
        <taxon>Tobamovirus</taxon>
    </lineage>
</organism>
<sequence length="1597" mass="181624">MAQFQQTVNMQTLQAAAGRNSLVNDLASRRVYDNAVEELNARSRRPKVHFSKSVSTEQTLLASNAYPEFEISFTHTQQAVHSLAGGLRTLELEYLMMQVPFGSLTYDIGGNFAAHLFKGRDYVHCCMPNLDVRDIARHEGHKEAIFSYLSRLDRQRRPVPEYQRAAFHNYAENPHFVHCDRPFQQCELSTVNRWDTYAIALHSIYDIPADEFGAALLRKNVKICYAAFHFHENMLLDCDSVTLEDIGATFQRAGDKLNFFFHNESTLNYTHSFSNIIKYVCKTFFPASQRYVYHKEFLVTRVNTWYCKFTRVDTFTLFRGVYKTSVDSEEFYKAMDDAWEYKKTLAMLNSERTIFKDSAAINFWFPKVRDMVIIPLFDASITTGRMSRREVLVNKDFVYTVLNHIKTYQAKALTYANVLSFVESIRSRVIINGVTARSEWDTDKAILGPLAMTFFLVTKLSHVQDEIVLKKFQKFDATAKELIWSSLCDALKGVIPSVKETLARGGFVKLAEESLEIKIPELYCTFTDRLVLEYKRTEEFQSCDLSKPLEESEKYYNALSELSVLENLGSFDLDAFKELCQKKNVDPDVAAKVVVAIMNSELTLPFKKPTEEEVAEALSGEVVQDEGLRLSNKAPFPCVSNLKEGLVPACGLCPNGANFDRVDMDISEFHLKSVDAVKKGAMMSAVYTGKIKVQQMKNYVDYLSASLSATVSNLCKVLRDVHGVDPESQEKSGVWDVRRGRWLLKPNAKCHAWGVAEDANHKLVIVLLNWDEGKPVCDETWFRLAVSSDSLVYSDMGKLKTLTSCCRDGEPPEPTAKLVLVDGVPGCGKTKEILEKVNFSEDLVLVPGKEASKMIIRRANQAGITRADKDNVRTVDSFLMHPPKRVFKRLFIDEGLMLHTGCVNFLMLLSHCDVAYVYVDTQQIPFICRVANFPYPAHFAKLVVDEKEDRRVTLRCPADVTYFLNQKYDGSVLCTSSVERSVSAEVVRGKGALNPITLPLEGKILTFTQADKFELLDKGYKDVNTVHEVQGETYEKTAIVRLTATPLEIISRASPHVLVALTRHTTRCKYYTVVLDPMVNVISELGKLSNFLLEMYKVESGTQXQLQIDTVFKGTNLFVPTPKSGDWRDMQFYYDTLLPGNSTILNEFDAVTMNLRDISLNVKDCRIDFSKSVQVPKERPVFMKPKLRTAAEMPRTAGLLENLVAMIKRNMNAPDLTGTIDIEDTASLVVEKFWDAYVVKEFSGTDGMAMTRESFSRWLSKQESSTVGQLADFNFVDLPAVDEYKHMIKSQPKQKLDLSIQDEYPALQTIVYHSKKINAIFGPMFSELTRMLLETIDTSKFLFYTRKTPTQIEEFFSDLDSSQAMEILELDISKYDKSQNEFHCAVEYKIWEKLGIDDWLAEVWRQGHRKTTLKDYTAGIKTCLWYQRKSGDVTTFIGNTIIIAACLSSMIPMDKVIKAAFCGDDSLIYIPKGLDLPDIQAGANLTWNFEAKLFRKKYGYFCGRYVIHHDRGAIVYYDPLKLISKLGCKHIRDEVHLEELRRSLCDVTSNLNNCAYFSQLDEAVAEVHKTAVGGAFVYCSIIKYLSDKRLFKDLFFV</sequence>
<evidence type="ECO:0000250" key="1"/>
<evidence type="ECO:0000255" key="2"/>
<evidence type="ECO:0000255" key="3">
    <source>
        <dbReference type="PROSITE-ProRule" id="PRU00539"/>
    </source>
</evidence>
<evidence type="ECO:0000255" key="4">
    <source>
        <dbReference type="PROSITE-ProRule" id="PRU01079"/>
    </source>
</evidence>
<evidence type="ECO:0000305" key="5"/>
<dbReference type="EC" id="2.7.7.48"/>
<dbReference type="EC" id="3.6.4.13"/>
<dbReference type="EMBL" id="U30944">
    <property type="protein sequence ID" value="AAB60599.2"/>
    <property type="molecule type" value="mRNA"/>
</dbReference>
<dbReference type="PIR" id="S65053">
    <property type="entry name" value="S65053"/>
</dbReference>
<dbReference type="RefSeq" id="NP_740757.2">
    <property type="nucleotide sequence ID" value="NC_004422.1"/>
</dbReference>
<dbReference type="GeneID" id="955946"/>
<dbReference type="KEGG" id="vg:955946"/>
<dbReference type="Proteomes" id="UP000008609">
    <property type="component" value="Segment"/>
</dbReference>
<dbReference type="GO" id="GO:0005524">
    <property type="term" value="F:ATP binding"/>
    <property type="evidence" value="ECO:0007669"/>
    <property type="project" value="UniProtKB-KW"/>
</dbReference>
<dbReference type="GO" id="GO:0016887">
    <property type="term" value="F:ATP hydrolysis activity"/>
    <property type="evidence" value="ECO:0007669"/>
    <property type="project" value="RHEA"/>
</dbReference>
<dbReference type="GO" id="GO:0008174">
    <property type="term" value="F:mRNA methyltransferase activity"/>
    <property type="evidence" value="ECO:0007669"/>
    <property type="project" value="InterPro"/>
</dbReference>
<dbReference type="GO" id="GO:0003723">
    <property type="term" value="F:RNA binding"/>
    <property type="evidence" value="ECO:0007669"/>
    <property type="project" value="InterPro"/>
</dbReference>
<dbReference type="GO" id="GO:0003724">
    <property type="term" value="F:RNA helicase activity"/>
    <property type="evidence" value="ECO:0007669"/>
    <property type="project" value="UniProtKB-EC"/>
</dbReference>
<dbReference type="GO" id="GO:0003968">
    <property type="term" value="F:RNA-directed RNA polymerase activity"/>
    <property type="evidence" value="ECO:0007669"/>
    <property type="project" value="UniProtKB-KW"/>
</dbReference>
<dbReference type="GO" id="GO:0006351">
    <property type="term" value="P:DNA-templated transcription"/>
    <property type="evidence" value="ECO:0007669"/>
    <property type="project" value="InterPro"/>
</dbReference>
<dbReference type="GO" id="GO:0016556">
    <property type="term" value="P:mRNA modification"/>
    <property type="evidence" value="ECO:0007669"/>
    <property type="project" value="InterPro"/>
</dbReference>
<dbReference type="GO" id="GO:0006396">
    <property type="term" value="P:RNA processing"/>
    <property type="evidence" value="ECO:0007669"/>
    <property type="project" value="InterPro"/>
</dbReference>
<dbReference type="GO" id="GO:0052170">
    <property type="term" value="P:symbiont-mediated suppression of host innate immune response"/>
    <property type="evidence" value="ECO:0007669"/>
    <property type="project" value="UniProtKB-KW"/>
</dbReference>
<dbReference type="GO" id="GO:0039694">
    <property type="term" value="P:viral RNA genome replication"/>
    <property type="evidence" value="ECO:0007669"/>
    <property type="project" value="InterPro"/>
</dbReference>
<dbReference type="CDD" id="cd23251">
    <property type="entry name" value="Virgaviridae_RdRp"/>
    <property type="match status" value="1"/>
</dbReference>
<dbReference type="Gene3D" id="3.30.450.420">
    <property type="match status" value="1"/>
</dbReference>
<dbReference type="Gene3D" id="3.40.50.300">
    <property type="entry name" value="P-loop containing nucleotide triphosphate hydrolases"/>
    <property type="match status" value="2"/>
</dbReference>
<dbReference type="InterPro" id="IPR027351">
    <property type="entry name" value="(+)RNA_virus_helicase_core_dom"/>
</dbReference>
<dbReference type="InterPro" id="IPR002588">
    <property type="entry name" value="Alphavirus-like_MT_dom"/>
</dbReference>
<dbReference type="InterPro" id="IPR043502">
    <property type="entry name" value="DNA/RNA_pol_sf"/>
</dbReference>
<dbReference type="InterPro" id="IPR027417">
    <property type="entry name" value="P-loop_NTPase"/>
</dbReference>
<dbReference type="InterPro" id="IPR001788">
    <property type="entry name" value="RNA-dep_RNA_pol_alsuvir"/>
</dbReference>
<dbReference type="InterPro" id="IPR007094">
    <property type="entry name" value="RNA-dir_pol_PSvirus"/>
</dbReference>
<dbReference type="InterPro" id="IPR049329">
    <property type="entry name" value="ToMV_Hel_N"/>
</dbReference>
<dbReference type="InterPro" id="IPR047310">
    <property type="entry name" value="Virgaviridae_RdRp"/>
</dbReference>
<dbReference type="Pfam" id="PF00978">
    <property type="entry name" value="RdRP_2"/>
    <property type="match status" value="1"/>
</dbReference>
<dbReference type="Pfam" id="PF20896">
    <property type="entry name" value="ToMV_Hel_N"/>
    <property type="match status" value="1"/>
</dbReference>
<dbReference type="Pfam" id="PF01443">
    <property type="entry name" value="Viral_helicase1"/>
    <property type="match status" value="1"/>
</dbReference>
<dbReference type="Pfam" id="PF01660">
    <property type="entry name" value="Vmethyltransf"/>
    <property type="match status" value="1"/>
</dbReference>
<dbReference type="SUPFAM" id="SSF56672">
    <property type="entry name" value="DNA/RNA polymerases"/>
    <property type="match status" value="1"/>
</dbReference>
<dbReference type="SUPFAM" id="SSF52540">
    <property type="entry name" value="P-loop containing nucleoside triphosphate hydrolases"/>
    <property type="match status" value="1"/>
</dbReference>
<dbReference type="PROSITE" id="PS51743">
    <property type="entry name" value="ALPHAVIRUS_MT"/>
    <property type="match status" value="1"/>
</dbReference>
<dbReference type="PROSITE" id="PS51657">
    <property type="entry name" value="PSRV_HELICASE"/>
    <property type="match status" value="1"/>
</dbReference>
<dbReference type="PROSITE" id="PS50507">
    <property type="entry name" value="RDRP_SSRNA_POS"/>
    <property type="match status" value="1"/>
</dbReference>
<reference key="1">
    <citation type="journal article" date="1996" name="Plant Mol. Biol.">
        <title>Nucleotide sequence of Chinese rape mosaic virus (oilseed rape mosaic virus), a crucifer tobamovirus infectious on Arabidopsis thaliana.</title>
        <authorList>
            <person name="Aguilar I."/>
            <person name="Sanchez F."/>
            <person name="Martin-Martin A."/>
            <person name="Martinez-Herrera D."/>
            <person name="Ponz F."/>
        </authorList>
    </citation>
    <scope>NUCLEOTIDE SEQUENCE [MRNA]</scope>
</reference>
<feature type="chain" id="PRO_0000041174" description="Replicase large subunit">
    <location>
        <begin position="1"/>
        <end position="1597"/>
    </location>
</feature>
<feature type="chain" id="PRO_0000041175" description="Replicase small subunit">
    <location>
        <begin position="1"/>
        <end position="1103"/>
    </location>
</feature>
<feature type="domain" description="Alphavirus-like MT" evidence="4">
    <location>
        <begin position="72"/>
        <end position="280"/>
    </location>
</feature>
<feature type="domain" description="(+)RNA virus helicase ATP-binding">
    <location>
        <begin position="791"/>
        <end position="950"/>
    </location>
</feature>
<feature type="domain" description="(+)RNA virus helicase C-terminal">
    <location>
        <begin position="951"/>
        <end position="1103"/>
    </location>
</feature>
<feature type="domain" description="RdRp catalytic" evidence="3">
    <location>
        <begin position="1365"/>
        <end position="1478"/>
    </location>
</feature>
<feature type="binding site" evidence="2">
    <location>
        <begin position="823"/>
        <end position="830"/>
    </location>
    <ligand>
        <name>ATP</name>
        <dbReference type="ChEBI" id="CHEBI:30616"/>
    </ligand>
</feature>
<feature type="sequence variant">
    <original>V</original>
    <variation>G</variation>
    <location>
        <position position="919"/>
    </location>
</feature>
<feature type="sequence variant">
    <original>H</original>
    <variation>Y</variation>
    <location>
        <position position="1286"/>
    </location>
</feature>
<comment type="function">
    <text evidence="1">The replicase large subunit is an RNA-dependent RNA polymerase active in viral RNA replication.</text>
</comment>
<comment type="function">
    <text evidence="1">The replicase small subunit is a methyltransferase active in RNA capping and an RNA helicase. It also acts as a suppressor of RNA-mediated gene silencing, also known as post-transcriptional gene silencing (PTGS), a mechanism of plant viral defense that limits the accumulation of viral RNAs. May mediate silencing suppression through either inhibition of HEN1-mediated siRNA or siRNA demethylation (By similarity).</text>
</comment>
<comment type="catalytic activity">
    <reaction evidence="3">
        <text>RNA(n) + a ribonucleoside 5'-triphosphate = RNA(n+1) + diphosphate</text>
        <dbReference type="Rhea" id="RHEA:21248"/>
        <dbReference type="Rhea" id="RHEA-COMP:14527"/>
        <dbReference type="Rhea" id="RHEA-COMP:17342"/>
        <dbReference type="ChEBI" id="CHEBI:33019"/>
        <dbReference type="ChEBI" id="CHEBI:61557"/>
        <dbReference type="ChEBI" id="CHEBI:140395"/>
        <dbReference type="EC" id="2.7.7.48"/>
    </reaction>
</comment>
<comment type="catalytic activity">
    <reaction>
        <text>ATP + H2O = ADP + phosphate + H(+)</text>
        <dbReference type="Rhea" id="RHEA:13065"/>
        <dbReference type="ChEBI" id="CHEBI:15377"/>
        <dbReference type="ChEBI" id="CHEBI:15378"/>
        <dbReference type="ChEBI" id="CHEBI:30616"/>
        <dbReference type="ChEBI" id="CHEBI:43474"/>
        <dbReference type="ChEBI" id="CHEBI:456216"/>
        <dbReference type="EC" id="3.6.4.13"/>
    </reaction>
</comment>
<comment type="subunit">
    <text evidence="1">Heterodimer of a large and a small subunit.</text>
</comment>
<comment type="miscellaneous">
    <text>Readthrough of the terminator codon UAG occurs between codons for Gln-1103 and Gln-1105.</text>
</comment>
<comment type="similarity">
    <text evidence="5">Belongs to the tobamovirus RNA-directed RNA polymerase family.</text>
</comment>
<keyword id="KW-0067">ATP-binding</keyword>
<keyword id="KW-0347">Helicase</keyword>
<keyword id="KW-0945">Host-virus interaction</keyword>
<keyword id="KW-0378">Hydrolase</keyword>
<keyword id="KW-1090">Inhibition of host innate immune response by virus</keyword>
<keyword id="KW-0547">Nucleotide-binding</keyword>
<keyword id="KW-0548">Nucleotidyltransferase</keyword>
<keyword id="KW-1185">Reference proteome</keyword>
<keyword id="KW-1159">RNA suppression of termination</keyword>
<keyword id="KW-0696">RNA-directed RNA polymerase</keyword>
<keyword id="KW-0941">Suppressor of RNA silencing</keyword>
<keyword id="KW-0808">Transferase</keyword>
<keyword id="KW-0899">Viral immunoevasion</keyword>
<keyword id="KW-0693">Viral RNA replication</keyword>
<accession>Q66220</accession>
<proteinExistence type="evidence at transcript level"/>